<accession>P35744</accession>
<keyword id="KW-0007">Acetylation</keyword>
<keyword id="KW-0903">Direct protein sequencing</keyword>
<keyword id="KW-0378">Hydrolase</keyword>
<keyword id="KW-0597">Phosphoprotein</keyword>
<keyword id="KW-1185">Reference proteome</keyword>
<gene>
    <name type="primary">ACYP2</name>
    <name type="synonym">ACYP</name>
</gene>
<name>ACYP2_CAVPO</name>
<organism>
    <name type="scientific">Cavia porcellus</name>
    <name type="common">Guinea pig</name>
    <dbReference type="NCBI Taxonomy" id="10141"/>
    <lineage>
        <taxon>Eukaryota</taxon>
        <taxon>Metazoa</taxon>
        <taxon>Chordata</taxon>
        <taxon>Craniata</taxon>
        <taxon>Vertebrata</taxon>
        <taxon>Euteleostomi</taxon>
        <taxon>Mammalia</taxon>
        <taxon>Eutheria</taxon>
        <taxon>Euarchontoglires</taxon>
        <taxon>Glires</taxon>
        <taxon>Rodentia</taxon>
        <taxon>Hystricomorpha</taxon>
        <taxon>Caviidae</taxon>
        <taxon>Cavia</taxon>
    </lineage>
</organism>
<proteinExistence type="evidence at protein level"/>
<evidence type="ECO:0000250" key="1">
    <source>
        <dbReference type="UniProtKB" id="P14621"/>
    </source>
</evidence>
<evidence type="ECO:0000250" key="2">
    <source>
        <dbReference type="UniProtKB" id="P35745"/>
    </source>
</evidence>
<evidence type="ECO:0000255" key="3">
    <source>
        <dbReference type="PROSITE-ProRule" id="PRU00520"/>
    </source>
</evidence>
<evidence type="ECO:0000269" key="4">
    <source>
    </source>
</evidence>
<evidence type="ECO:0000305" key="5"/>
<reference key="1">
    <citation type="journal article" date="1988" name="J. Protein Chem.">
        <title>Guinea pig acylphosphatase: the amino acid sequence.</title>
        <authorList>
            <person name="Manao G."/>
            <person name="Cappugi G."/>
            <person name="Modesti A."/>
            <person name="Stefani M."/>
            <person name="Marzocchini R."/>
            <person name="Degl'Innocenti D."/>
            <person name="Camici G."/>
        </authorList>
    </citation>
    <scope>PROTEIN SEQUENCE OF 2-99</scope>
    <scope>ACETYLATION AT SER-2</scope>
    <source>
        <tissue>Skeletal muscle</tissue>
    </source>
</reference>
<comment type="function">
    <text>Its physiological role is not yet clear.</text>
</comment>
<comment type="catalytic activity">
    <reaction>
        <text>an acyl phosphate + H2O = a carboxylate + phosphate + H(+)</text>
        <dbReference type="Rhea" id="RHEA:14965"/>
        <dbReference type="ChEBI" id="CHEBI:15377"/>
        <dbReference type="ChEBI" id="CHEBI:15378"/>
        <dbReference type="ChEBI" id="CHEBI:29067"/>
        <dbReference type="ChEBI" id="CHEBI:43474"/>
        <dbReference type="ChEBI" id="CHEBI:59918"/>
        <dbReference type="EC" id="3.6.1.7"/>
    </reaction>
</comment>
<comment type="similarity">
    <text evidence="5">Belongs to the acylphosphatase family.</text>
</comment>
<dbReference type="EC" id="3.6.1.7"/>
<dbReference type="PIR" id="A60893">
    <property type="entry name" value="QPGP"/>
</dbReference>
<dbReference type="SMR" id="P35744"/>
<dbReference type="FunCoup" id="P35744">
    <property type="interactions" value="572"/>
</dbReference>
<dbReference type="STRING" id="10141.ENSCPOP00000007930"/>
<dbReference type="iPTMnet" id="P35744"/>
<dbReference type="eggNOG" id="KOG3360">
    <property type="taxonomic scope" value="Eukaryota"/>
</dbReference>
<dbReference type="InParanoid" id="P35744"/>
<dbReference type="Proteomes" id="UP000005447">
    <property type="component" value="Unassembled WGS sequence"/>
</dbReference>
<dbReference type="GO" id="GO:0003998">
    <property type="term" value="F:acylphosphatase activity"/>
    <property type="evidence" value="ECO:0007669"/>
    <property type="project" value="UniProtKB-EC"/>
</dbReference>
<dbReference type="FunFam" id="3.30.70.100:FF:000011">
    <property type="entry name" value="Acylphosphatase"/>
    <property type="match status" value="1"/>
</dbReference>
<dbReference type="Gene3D" id="3.30.70.100">
    <property type="match status" value="1"/>
</dbReference>
<dbReference type="InterPro" id="IPR020456">
    <property type="entry name" value="Acylphosphatase"/>
</dbReference>
<dbReference type="InterPro" id="IPR001792">
    <property type="entry name" value="Acylphosphatase-like_dom"/>
</dbReference>
<dbReference type="InterPro" id="IPR036046">
    <property type="entry name" value="Acylphosphatase-like_dom_sf"/>
</dbReference>
<dbReference type="InterPro" id="IPR017968">
    <property type="entry name" value="Acylphosphatase_CS"/>
</dbReference>
<dbReference type="PANTHER" id="PTHR10029">
    <property type="entry name" value="ACYLPHOSPHATASE"/>
    <property type="match status" value="1"/>
</dbReference>
<dbReference type="PANTHER" id="PTHR10029:SF20">
    <property type="entry name" value="ACYLPHOSPHATASE-2"/>
    <property type="match status" value="1"/>
</dbReference>
<dbReference type="Pfam" id="PF00708">
    <property type="entry name" value="Acylphosphatase"/>
    <property type="match status" value="1"/>
</dbReference>
<dbReference type="PRINTS" id="PR00112">
    <property type="entry name" value="ACYLPHPHTASE"/>
</dbReference>
<dbReference type="SUPFAM" id="SSF54975">
    <property type="entry name" value="Acylphosphatase/BLUF domain-like"/>
    <property type="match status" value="1"/>
</dbReference>
<dbReference type="PROSITE" id="PS00150">
    <property type="entry name" value="ACYLPHOSPHATASE_1"/>
    <property type="match status" value="1"/>
</dbReference>
<dbReference type="PROSITE" id="PS00151">
    <property type="entry name" value="ACYLPHOSPHATASE_2"/>
    <property type="match status" value="1"/>
</dbReference>
<dbReference type="PROSITE" id="PS51160">
    <property type="entry name" value="ACYLPHOSPHATASE_3"/>
    <property type="match status" value="1"/>
</dbReference>
<feature type="initiator methionine" description="Removed" evidence="1">
    <location>
        <position position="1"/>
    </location>
</feature>
<feature type="chain" id="PRO_0000158540" description="Acylphosphatase-2">
    <location>
        <begin position="2"/>
        <end position="99"/>
    </location>
</feature>
<feature type="domain" description="Acylphosphatase-like" evidence="3">
    <location>
        <begin position="9"/>
        <end position="99"/>
    </location>
</feature>
<feature type="active site" evidence="3">
    <location>
        <position position="24"/>
    </location>
</feature>
<feature type="active site" evidence="3">
    <location>
        <position position="42"/>
    </location>
</feature>
<feature type="modified residue" description="N-acetylserine" evidence="4">
    <location>
        <position position="2"/>
    </location>
</feature>
<feature type="modified residue" description="Phosphoserine" evidence="2">
    <location>
        <position position="93"/>
    </location>
</feature>
<sequence>MSAAAQLKSVDYEVFGRVQGVCFRMYTEGEAKKIGVVGWVKNTSKGTVTGQVQGPEEKVNSMKSWLSKVGSPSSRIDRTNFSNEKSISKLEYSNFSIRY</sequence>
<protein>
    <recommendedName>
        <fullName>Acylphosphatase-2</fullName>
        <ecNumber>3.6.1.7</ecNumber>
    </recommendedName>
    <alternativeName>
        <fullName>Acylphosphatase, muscle type isozyme</fullName>
    </alternativeName>
    <alternativeName>
        <fullName>Acylphosphate phosphohydrolase 2</fullName>
    </alternativeName>
</protein>